<evidence type="ECO:0000255" key="1">
    <source>
        <dbReference type="HAMAP-Rule" id="MF_00068"/>
    </source>
</evidence>
<accession>Q8YUC0</accession>
<proteinExistence type="inferred from homology"/>
<protein>
    <recommendedName>
        <fullName evidence="1">N-acetylmuramic acid 6-phosphate etherase</fullName>
        <shortName evidence="1">MurNAc-6-P etherase</shortName>
        <ecNumber evidence="1">4.2.1.126</ecNumber>
    </recommendedName>
    <alternativeName>
        <fullName evidence="1">N-acetylmuramic acid 6-phosphate hydrolase</fullName>
    </alternativeName>
    <alternativeName>
        <fullName evidence="1">N-acetylmuramic acid 6-phosphate lyase</fullName>
    </alternativeName>
</protein>
<keyword id="KW-0119">Carbohydrate metabolism</keyword>
<keyword id="KW-0456">Lyase</keyword>
<keyword id="KW-1185">Reference proteome</keyword>
<comment type="function">
    <text evidence="1">Specifically catalyzes the cleavage of the D-lactyl ether substituent of MurNAc 6-phosphate, producing GlcNAc 6-phosphate and D-lactate.</text>
</comment>
<comment type="catalytic activity">
    <reaction evidence="1">
        <text>N-acetyl-D-muramate 6-phosphate + H2O = N-acetyl-D-glucosamine 6-phosphate + (R)-lactate</text>
        <dbReference type="Rhea" id="RHEA:26410"/>
        <dbReference type="ChEBI" id="CHEBI:15377"/>
        <dbReference type="ChEBI" id="CHEBI:16004"/>
        <dbReference type="ChEBI" id="CHEBI:57513"/>
        <dbReference type="ChEBI" id="CHEBI:58722"/>
        <dbReference type="EC" id="4.2.1.126"/>
    </reaction>
</comment>
<comment type="pathway">
    <text evidence="1">Amino-sugar metabolism; N-acetylmuramate degradation.</text>
</comment>
<comment type="subunit">
    <text evidence="1">Homodimer.</text>
</comment>
<comment type="miscellaneous">
    <text evidence="1">A lyase-type mechanism (elimination/hydration) is suggested for the cleavage of the lactyl ether bond of MurNAc 6-phosphate, with the formation of an alpha,beta-unsaturated aldehyde intermediate with (E)-stereochemistry, followed by the syn addition of water to give product.</text>
</comment>
<comment type="similarity">
    <text evidence="1">Belongs to the GCKR-like family. MurNAc-6-P etherase subfamily.</text>
</comment>
<name>MURQ_NOSS1</name>
<gene>
    <name evidence="1" type="primary">murQ</name>
    <name type="ordered locus">alr2432</name>
</gene>
<feature type="chain" id="PRO_0000249601" description="N-acetylmuramic acid 6-phosphate etherase">
    <location>
        <begin position="1"/>
        <end position="307"/>
    </location>
</feature>
<feature type="domain" description="SIS" evidence="1">
    <location>
        <begin position="59"/>
        <end position="222"/>
    </location>
</feature>
<feature type="active site" description="Proton donor" evidence="1">
    <location>
        <position position="87"/>
    </location>
</feature>
<feature type="active site" evidence="1">
    <location>
        <position position="118"/>
    </location>
</feature>
<sequence>MADLQERGHLLTEQVNPLSQNLDQLSSLELVELFNSEDLKTVEAVAAAKVQIATAIEQTADRLRQGGRLFYVGAGTSGRLGVLDAAECPPTFCTPPELVQGIIAGGAGALVRSSEDLEDRAEDGDAAIAQRHITQLDVVVGITAGGTTPFVQGAINSARQRGALTIFIACVPAEQVSFTADIDIRLLTGPEILAGSTRLKAGTVTKLTLNILSTGVMVKLGKVYGNRMVDVAVTNQKLRDRALRILQDLTGLSREAAGFLLERSSKWVKLALVMHWTGLDKDAGDRLLSAHQGNLREAVASYKNQND</sequence>
<reference key="1">
    <citation type="journal article" date="2001" name="DNA Res.">
        <title>Complete genomic sequence of the filamentous nitrogen-fixing cyanobacterium Anabaena sp. strain PCC 7120.</title>
        <authorList>
            <person name="Kaneko T."/>
            <person name="Nakamura Y."/>
            <person name="Wolk C.P."/>
            <person name="Kuritz T."/>
            <person name="Sasamoto S."/>
            <person name="Watanabe A."/>
            <person name="Iriguchi M."/>
            <person name="Ishikawa A."/>
            <person name="Kawashima K."/>
            <person name="Kimura T."/>
            <person name="Kishida Y."/>
            <person name="Kohara M."/>
            <person name="Matsumoto M."/>
            <person name="Matsuno A."/>
            <person name="Muraki A."/>
            <person name="Nakazaki N."/>
            <person name="Shimpo S."/>
            <person name="Sugimoto M."/>
            <person name="Takazawa M."/>
            <person name="Yamada M."/>
            <person name="Yasuda M."/>
            <person name="Tabata S."/>
        </authorList>
    </citation>
    <scope>NUCLEOTIDE SEQUENCE [LARGE SCALE GENOMIC DNA]</scope>
    <source>
        <strain>PCC 7120 / SAG 25.82 / UTEX 2576</strain>
    </source>
</reference>
<dbReference type="EC" id="4.2.1.126" evidence="1"/>
<dbReference type="EMBL" id="BA000019">
    <property type="protein sequence ID" value="BAB74131.1"/>
    <property type="molecule type" value="Genomic_DNA"/>
</dbReference>
<dbReference type="PIR" id="AI2109">
    <property type="entry name" value="AI2109"/>
</dbReference>
<dbReference type="RefSeq" id="WP_010996588.1">
    <property type="nucleotide sequence ID" value="NZ_RSCN01000002.1"/>
</dbReference>
<dbReference type="SMR" id="Q8YUC0"/>
<dbReference type="STRING" id="103690.gene:10494462"/>
<dbReference type="KEGG" id="ana:alr2432"/>
<dbReference type="eggNOG" id="COG2103">
    <property type="taxonomic scope" value="Bacteria"/>
</dbReference>
<dbReference type="OrthoDB" id="9813395at2"/>
<dbReference type="UniPathway" id="UPA00342"/>
<dbReference type="Proteomes" id="UP000002483">
    <property type="component" value="Chromosome"/>
</dbReference>
<dbReference type="GO" id="GO:0097367">
    <property type="term" value="F:carbohydrate derivative binding"/>
    <property type="evidence" value="ECO:0007669"/>
    <property type="project" value="InterPro"/>
</dbReference>
<dbReference type="GO" id="GO:0016835">
    <property type="term" value="F:carbon-oxygen lyase activity"/>
    <property type="evidence" value="ECO:0007669"/>
    <property type="project" value="UniProtKB-UniRule"/>
</dbReference>
<dbReference type="GO" id="GO:0016803">
    <property type="term" value="F:ether hydrolase activity"/>
    <property type="evidence" value="ECO:0007669"/>
    <property type="project" value="TreeGrafter"/>
</dbReference>
<dbReference type="GO" id="GO:0046348">
    <property type="term" value="P:amino sugar catabolic process"/>
    <property type="evidence" value="ECO:0007669"/>
    <property type="project" value="InterPro"/>
</dbReference>
<dbReference type="GO" id="GO:0097173">
    <property type="term" value="P:N-acetylmuramic acid catabolic process"/>
    <property type="evidence" value="ECO:0007669"/>
    <property type="project" value="UniProtKB-UniPathway"/>
</dbReference>
<dbReference type="GO" id="GO:0009254">
    <property type="term" value="P:peptidoglycan turnover"/>
    <property type="evidence" value="ECO:0007669"/>
    <property type="project" value="TreeGrafter"/>
</dbReference>
<dbReference type="CDD" id="cd05007">
    <property type="entry name" value="SIS_Etherase"/>
    <property type="match status" value="1"/>
</dbReference>
<dbReference type="FunFam" id="3.40.50.10490:FF:000014">
    <property type="entry name" value="N-acetylmuramic acid 6-phosphate etherase"/>
    <property type="match status" value="1"/>
</dbReference>
<dbReference type="Gene3D" id="1.10.8.1080">
    <property type="match status" value="1"/>
</dbReference>
<dbReference type="Gene3D" id="3.40.50.10490">
    <property type="entry name" value="Glucose-6-phosphate isomerase like protein, domain 1"/>
    <property type="match status" value="1"/>
</dbReference>
<dbReference type="HAMAP" id="MF_00068">
    <property type="entry name" value="MurQ"/>
    <property type="match status" value="1"/>
</dbReference>
<dbReference type="InterPro" id="IPR005488">
    <property type="entry name" value="Etherase_MurQ"/>
</dbReference>
<dbReference type="InterPro" id="IPR005486">
    <property type="entry name" value="Glucokinase_regulatory_CS"/>
</dbReference>
<dbReference type="InterPro" id="IPR040190">
    <property type="entry name" value="MURQ/GCKR"/>
</dbReference>
<dbReference type="InterPro" id="IPR001347">
    <property type="entry name" value="SIS_dom"/>
</dbReference>
<dbReference type="InterPro" id="IPR046348">
    <property type="entry name" value="SIS_dom_sf"/>
</dbReference>
<dbReference type="NCBIfam" id="TIGR00274">
    <property type="entry name" value="N-acetylmuramic acid 6-phosphate etherase"/>
    <property type="match status" value="1"/>
</dbReference>
<dbReference type="NCBIfam" id="NF003915">
    <property type="entry name" value="PRK05441.1"/>
    <property type="match status" value="1"/>
</dbReference>
<dbReference type="NCBIfam" id="NF009222">
    <property type="entry name" value="PRK12570.1"/>
    <property type="match status" value="1"/>
</dbReference>
<dbReference type="PANTHER" id="PTHR10088">
    <property type="entry name" value="GLUCOKINASE REGULATORY PROTEIN"/>
    <property type="match status" value="1"/>
</dbReference>
<dbReference type="PANTHER" id="PTHR10088:SF4">
    <property type="entry name" value="GLUCOKINASE REGULATORY PROTEIN"/>
    <property type="match status" value="1"/>
</dbReference>
<dbReference type="Pfam" id="PF20741">
    <property type="entry name" value="GKRP-like_C"/>
    <property type="match status" value="1"/>
</dbReference>
<dbReference type="Pfam" id="PF22645">
    <property type="entry name" value="GKRP_SIS_N"/>
    <property type="match status" value="1"/>
</dbReference>
<dbReference type="SUPFAM" id="SSF53697">
    <property type="entry name" value="SIS domain"/>
    <property type="match status" value="1"/>
</dbReference>
<dbReference type="PROSITE" id="PS01272">
    <property type="entry name" value="GCKR"/>
    <property type="match status" value="1"/>
</dbReference>
<dbReference type="PROSITE" id="PS51464">
    <property type="entry name" value="SIS"/>
    <property type="match status" value="1"/>
</dbReference>
<organism>
    <name type="scientific">Nostoc sp. (strain PCC 7120 / SAG 25.82 / UTEX 2576)</name>
    <dbReference type="NCBI Taxonomy" id="103690"/>
    <lineage>
        <taxon>Bacteria</taxon>
        <taxon>Bacillati</taxon>
        <taxon>Cyanobacteriota</taxon>
        <taxon>Cyanophyceae</taxon>
        <taxon>Nostocales</taxon>
        <taxon>Nostocaceae</taxon>
        <taxon>Nostoc</taxon>
    </lineage>
</organism>